<protein>
    <recommendedName>
        <fullName evidence="1">Uracil phosphoribosyltransferase</fullName>
        <ecNumber evidence="1">2.4.2.9</ecNumber>
    </recommendedName>
    <alternativeName>
        <fullName evidence="1">UMP pyrophosphorylase</fullName>
    </alternativeName>
    <alternativeName>
        <fullName evidence="1">UPRTase</fullName>
    </alternativeName>
</protein>
<organism>
    <name type="scientific">Actinobacillus pleuropneumoniae serotype 3 (strain JL03)</name>
    <dbReference type="NCBI Taxonomy" id="434271"/>
    <lineage>
        <taxon>Bacteria</taxon>
        <taxon>Pseudomonadati</taxon>
        <taxon>Pseudomonadota</taxon>
        <taxon>Gammaproteobacteria</taxon>
        <taxon>Pasteurellales</taxon>
        <taxon>Pasteurellaceae</taxon>
        <taxon>Actinobacillus</taxon>
    </lineage>
</organism>
<gene>
    <name evidence="1" type="primary">upp</name>
    <name type="ordered locus">APJL_0419</name>
</gene>
<dbReference type="EC" id="2.4.2.9" evidence="1"/>
<dbReference type="EMBL" id="CP000687">
    <property type="protein sequence ID" value="ABY69008.1"/>
    <property type="molecule type" value="Genomic_DNA"/>
</dbReference>
<dbReference type="RefSeq" id="WP_005596420.1">
    <property type="nucleotide sequence ID" value="NC_010278.1"/>
</dbReference>
<dbReference type="SMR" id="B0BTQ3"/>
<dbReference type="GeneID" id="48598564"/>
<dbReference type="KEGG" id="apj:APJL_0419"/>
<dbReference type="HOGENOM" id="CLU_067096_2_2_6"/>
<dbReference type="UniPathway" id="UPA00574">
    <property type="reaction ID" value="UER00636"/>
</dbReference>
<dbReference type="Proteomes" id="UP000008547">
    <property type="component" value="Chromosome"/>
</dbReference>
<dbReference type="GO" id="GO:0005525">
    <property type="term" value="F:GTP binding"/>
    <property type="evidence" value="ECO:0007669"/>
    <property type="project" value="UniProtKB-KW"/>
</dbReference>
<dbReference type="GO" id="GO:0000287">
    <property type="term" value="F:magnesium ion binding"/>
    <property type="evidence" value="ECO:0007669"/>
    <property type="project" value="UniProtKB-UniRule"/>
</dbReference>
<dbReference type="GO" id="GO:0004845">
    <property type="term" value="F:uracil phosphoribosyltransferase activity"/>
    <property type="evidence" value="ECO:0007669"/>
    <property type="project" value="UniProtKB-UniRule"/>
</dbReference>
<dbReference type="GO" id="GO:0044206">
    <property type="term" value="P:UMP salvage"/>
    <property type="evidence" value="ECO:0007669"/>
    <property type="project" value="UniProtKB-UniRule"/>
</dbReference>
<dbReference type="GO" id="GO:0006223">
    <property type="term" value="P:uracil salvage"/>
    <property type="evidence" value="ECO:0007669"/>
    <property type="project" value="InterPro"/>
</dbReference>
<dbReference type="CDD" id="cd06223">
    <property type="entry name" value="PRTases_typeI"/>
    <property type="match status" value="1"/>
</dbReference>
<dbReference type="FunFam" id="3.40.50.2020:FF:000003">
    <property type="entry name" value="Uracil phosphoribosyltransferase"/>
    <property type="match status" value="1"/>
</dbReference>
<dbReference type="Gene3D" id="3.40.50.2020">
    <property type="match status" value="1"/>
</dbReference>
<dbReference type="HAMAP" id="MF_01218_B">
    <property type="entry name" value="Upp_B"/>
    <property type="match status" value="1"/>
</dbReference>
<dbReference type="InterPro" id="IPR000836">
    <property type="entry name" value="PRibTrfase_dom"/>
</dbReference>
<dbReference type="InterPro" id="IPR029057">
    <property type="entry name" value="PRTase-like"/>
</dbReference>
<dbReference type="InterPro" id="IPR034332">
    <property type="entry name" value="Upp_B"/>
</dbReference>
<dbReference type="InterPro" id="IPR050054">
    <property type="entry name" value="UPRTase/APRTase"/>
</dbReference>
<dbReference type="InterPro" id="IPR005765">
    <property type="entry name" value="Ura_phspho_trans"/>
</dbReference>
<dbReference type="NCBIfam" id="NF001097">
    <property type="entry name" value="PRK00129.1"/>
    <property type="match status" value="1"/>
</dbReference>
<dbReference type="NCBIfam" id="TIGR01091">
    <property type="entry name" value="upp"/>
    <property type="match status" value="1"/>
</dbReference>
<dbReference type="PANTHER" id="PTHR32315">
    <property type="entry name" value="ADENINE PHOSPHORIBOSYLTRANSFERASE"/>
    <property type="match status" value="1"/>
</dbReference>
<dbReference type="PANTHER" id="PTHR32315:SF4">
    <property type="entry name" value="URACIL PHOSPHORIBOSYLTRANSFERASE, CHLOROPLASTIC"/>
    <property type="match status" value="1"/>
</dbReference>
<dbReference type="Pfam" id="PF14681">
    <property type="entry name" value="UPRTase"/>
    <property type="match status" value="1"/>
</dbReference>
<dbReference type="SUPFAM" id="SSF53271">
    <property type="entry name" value="PRTase-like"/>
    <property type="match status" value="1"/>
</dbReference>
<sequence length="208" mass="22508">MKIVEVKHPLVKHKLGLMRAADINTKDFRALATEVGSLLTYEATTDLETEAIEIDGWCGKVEVERIKGKKVTVVPILRAGLGMMDGVLEHIPSARISVVGIYRNEETLEPVPYFTKLANDVEERLAIIVDPMLATGGSMIATIDLLKKAGCKQIKVLVLVAAPEGIKALEAAHPDVELYTASIDSHLNEHGYIVPGLGDAGDKIFGTK</sequence>
<accession>B0BTQ3</accession>
<evidence type="ECO:0000255" key="1">
    <source>
        <dbReference type="HAMAP-Rule" id="MF_01218"/>
    </source>
</evidence>
<comment type="function">
    <text evidence="1">Catalyzes the conversion of uracil and 5-phospho-alpha-D-ribose 1-diphosphate (PRPP) to UMP and diphosphate.</text>
</comment>
<comment type="catalytic activity">
    <reaction evidence="1">
        <text>UMP + diphosphate = 5-phospho-alpha-D-ribose 1-diphosphate + uracil</text>
        <dbReference type="Rhea" id="RHEA:13017"/>
        <dbReference type="ChEBI" id="CHEBI:17568"/>
        <dbReference type="ChEBI" id="CHEBI:33019"/>
        <dbReference type="ChEBI" id="CHEBI:57865"/>
        <dbReference type="ChEBI" id="CHEBI:58017"/>
        <dbReference type="EC" id="2.4.2.9"/>
    </reaction>
</comment>
<comment type="cofactor">
    <cofactor evidence="1">
        <name>Mg(2+)</name>
        <dbReference type="ChEBI" id="CHEBI:18420"/>
    </cofactor>
    <text evidence="1">Binds 1 Mg(2+) ion per subunit. The magnesium is bound as Mg-PRPP.</text>
</comment>
<comment type="activity regulation">
    <text evidence="1">Allosterically activated by GTP.</text>
</comment>
<comment type="pathway">
    <text evidence="1">Pyrimidine metabolism; UMP biosynthesis via salvage pathway; UMP from uracil: step 1/1.</text>
</comment>
<comment type="similarity">
    <text evidence="1">Belongs to the UPRTase family.</text>
</comment>
<proteinExistence type="inferred from homology"/>
<name>UPP_ACTPJ</name>
<feature type="chain" id="PRO_1000139089" description="Uracil phosphoribosyltransferase">
    <location>
        <begin position="1"/>
        <end position="208"/>
    </location>
</feature>
<feature type="binding site" evidence="1">
    <location>
        <position position="78"/>
    </location>
    <ligand>
        <name>5-phospho-alpha-D-ribose 1-diphosphate</name>
        <dbReference type="ChEBI" id="CHEBI:58017"/>
    </ligand>
</feature>
<feature type="binding site" evidence="1">
    <location>
        <position position="103"/>
    </location>
    <ligand>
        <name>5-phospho-alpha-D-ribose 1-diphosphate</name>
        <dbReference type="ChEBI" id="CHEBI:58017"/>
    </ligand>
</feature>
<feature type="binding site" evidence="1">
    <location>
        <begin position="130"/>
        <end position="138"/>
    </location>
    <ligand>
        <name>5-phospho-alpha-D-ribose 1-diphosphate</name>
        <dbReference type="ChEBI" id="CHEBI:58017"/>
    </ligand>
</feature>
<feature type="binding site" evidence="1">
    <location>
        <position position="193"/>
    </location>
    <ligand>
        <name>uracil</name>
        <dbReference type="ChEBI" id="CHEBI:17568"/>
    </ligand>
</feature>
<feature type="binding site" evidence="1">
    <location>
        <begin position="198"/>
        <end position="200"/>
    </location>
    <ligand>
        <name>uracil</name>
        <dbReference type="ChEBI" id="CHEBI:17568"/>
    </ligand>
</feature>
<feature type="binding site" evidence="1">
    <location>
        <position position="199"/>
    </location>
    <ligand>
        <name>5-phospho-alpha-D-ribose 1-diphosphate</name>
        <dbReference type="ChEBI" id="CHEBI:58017"/>
    </ligand>
</feature>
<keyword id="KW-0021">Allosteric enzyme</keyword>
<keyword id="KW-0328">Glycosyltransferase</keyword>
<keyword id="KW-0342">GTP-binding</keyword>
<keyword id="KW-0460">Magnesium</keyword>
<keyword id="KW-0547">Nucleotide-binding</keyword>
<keyword id="KW-0808">Transferase</keyword>
<reference key="1">
    <citation type="journal article" date="2008" name="PLoS ONE">
        <title>Genome biology of Actinobacillus pleuropneumoniae JL03, an isolate of serotype 3 prevalent in China.</title>
        <authorList>
            <person name="Xu Z."/>
            <person name="Zhou Y."/>
            <person name="Li L."/>
            <person name="Zhou R."/>
            <person name="Xiao S."/>
            <person name="Wan Y."/>
            <person name="Zhang S."/>
            <person name="Wang K."/>
            <person name="Li W."/>
            <person name="Li L."/>
            <person name="Jin H."/>
            <person name="Kang M."/>
            <person name="Dalai B."/>
            <person name="Li T."/>
            <person name="Liu L."/>
            <person name="Cheng Y."/>
            <person name="Zhang L."/>
            <person name="Xu T."/>
            <person name="Zheng H."/>
            <person name="Pu S."/>
            <person name="Wang B."/>
            <person name="Gu W."/>
            <person name="Zhang X.L."/>
            <person name="Zhu G.-F."/>
            <person name="Wang S."/>
            <person name="Zhao G.-P."/>
            <person name="Chen H."/>
        </authorList>
    </citation>
    <scope>NUCLEOTIDE SEQUENCE [LARGE SCALE GENOMIC DNA]</scope>
    <source>
        <strain>JL03</strain>
    </source>
</reference>